<organism>
    <name type="scientific">Neosartorya fischeri (strain ATCC 1020 / DSM 3700 / CBS 544.65 / FGSC A1164 / JCM 1740 / NRRL 181 / WB 181)</name>
    <name type="common">Aspergillus fischerianus</name>
    <dbReference type="NCBI Taxonomy" id="331117"/>
    <lineage>
        <taxon>Eukaryota</taxon>
        <taxon>Fungi</taxon>
        <taxon>Dikarya</taxon>
        <taxon>Ascomycota</taxon>
        <taxon>Pezizomycotina</taxon>
        <taxon>Eurotiomycetes</taxon>
        <taxon>Eurotiomycetidae</taxon>
        <taxon>Eurotiales</taxon>
        <taxon>Aspergillaceae</taxon>
        <taxon>Aspergillus</taxon>
        <taxon>Aspergillus subgen. Fumigati</taxon>
    </lineage>
</organism>
<sequence length="118" mass="13738">MRSKFKDEHPFEKRKAEAERIRQKYADRIPVICEKVEKSDIATIDKKKYLVPADLTVGQFVYVIRKRIKLSPEKAIFIFVDEVLPPTAALMSSIYEEHKDEDGFLYITYSGENTFGDC</sequence>
<evidence type="ECO:0000250" key="1">
    <source>
        <dbReference type="UniProtKB" id="P38182"/>
    </source>
</evidence>
<evidence type="ECO:0000305" key="2"/>
<reference key="1">
    <citation type="journal article" date="2008" name="PLoS Genet.">
        <title>Genomic islands in the pathogenic filamentous fungus Aspergillus fumigatus.</title>
        <authorList>
            <person name="Fedorova N.D."/>
            <person name="Khaldi N."/>
            <person name="Joardar V.S."/>
            <person name="Maiti R."/>
            <person name="Amedeo P."/>
            <person name="Anderson M.J."/>
            <person name="Crabtree J."/>
            <person name="Silva J.C."/>
            <person name="Badger J.H."/>
            <person name="Albarraq A."/>
            <person name="Angiuoli S."/>
            <person name="Bussey H."/>
            <person name="Bowyer P."/>
            <person name="Cotty P.J."/>
            <person name="Dyer P.S."/>
            <person name="Egan A."/>
            <person name="Galens K."/>
            <person name="Fraser-Liggett C.M."/>
            <person name="Haas B.J."/>
            <person name="Inman J.M."/>
            <person name="Kent R."/>
            <person name="Lemieux S."/>
            <person name="Malavazi I."/>
            <person name="Orvis J."/>
            <person name="Roemer T."/>
            <person name="Ronning C.M."/>
            <person name="Sundaram J.P."/>
            <person name="Sutton G."/>
            <person name="Turner G."/>
            <person name="Venter J.C."/>
            <person name="White O.R."/>
            <person name="Whitty B.R."/>
            <person name="Youngman P."/>
            <person name="Wolfe K.H."/>
            <person name="Goldman G.H."/>
            <person name="Wortman J.R."/>
            <person name="Jiang B."/>
            <person name="Denning D.W."/>
            <person name="Nierman W.C."/>
        </authorList>
    </citation>
    <scope>NUCLEOTIDE SEQUENCE [LARGE SCALE GENOMIC DNA]</scope>
    <source>
        <strain>ATCC 1020 / DSM 3700 / CBS 544.65 / FGSC A1164 / JCM 1740 / NRRL 181 / WB 181</strain>
    </source>
</reference>
<comment type="function">
    <text evidence="1">Ubiquitin-like modifier involved in autophagosome formation. With atg4, mediates the delivery of the autophagosomes to the vacuole via the microtubule cytoskeleton. Required for selective autophagic degradation of the nucleus (nucleophagy) as well as for mitophagy which contributes to regulate mitochondrial quantity and quality by eliminating the mitochondria to a basal level to fulfill cellular energy requirements and preventing excess ROS production. Participates also in membrane fusion events that take place in the early secretory pathway. Also involved in endoplasmic reticulum-specific autophagic process and is essential for the survival of cells subjected to severe ER stress. The atg8-PE conjugate mediates tethering between adjacent membranes and stimulates membrane hemifusion, leading to expansion of the autophagosomal membrane during autophagy.</text>
</comment>
<comment type="subcellular location">
    <subcellularLocation>
        <location evidence="1">Cytoplasmic vesicle</location>
        <location evidence="1">Autophagosome membrane</location>
        <topology evidence="1">Lipid-anchor</topology>
    </subcellularLocation>
    <subcellularLocation>
        <location evidence="1">Vacuole membrane</location>
        <topology evidence="1">Lipid-anchor</topology>
    </subcellularLocation>
</comment>
<comment type="PTM">
    <text evidence="1">The C-terminal 2 residues are removed by atg4 to expose Gly-116 at the C-terminus. The c-terminal Gly is then amidated with phosphatidylethanolamine by an activating system similar to that for ubiquitin.</text>
</comment>
<comment type="similarity">
    <text evidence="2">Belongs to the ATG8 family.</text>
</comment>
<protein>
    <recommendedName>
        <fullName>Autophagy-related protein 8</fullName>
    </recommendedName>
    <alternativeName>
        <fullName>Autophagy-related ubiquitin-like modifier atg8</fullName>
    </alternativeName>
</protein>
<keyword id="KW-0072">Autophagy</keyword>
<keyword id="KW-0968">Cytoplasmic vesicle</keyword>
<keyword id="KW-0449">Lipoprotein</keyword>
<keyword id="KW-0472">Membrane</keyword>
<keyword id="KW-0653">Protein transport</keyword>
<keyword id="KW-1185">Reference proteome</keyword>
<keyword id="KW-0813">Transport</keyword>
<keyword id="KW-0833">Ubl conjugation pathway</keyword>
<keyword id="KW-0926">Vacuole</keyword>
<dbReference type="EMBL" id="DS027688">
    <property type="protein sequence ID" value="EAW23027.1"/>
    <property type="molecule type" value="Genomic_DNA"/>
</dbReference>
<dbReference type="RefSeq" id="XP_001264924.1">
    <property type="nucleotide sequence ID" value="XM_001264923.1"/>
</dbReference>
<dbReference type="SMR" id="A1D3N4"/>
<dbReference type="STRING" id="331117.A1D3N4"/>
<dbReference type="EnsemblFungi" id="EAW23027">
    <property type="protein sequence ID" value="EAW23027"/>
    <property type="gene ID" value="NFIA_017280"/>
</dbReference>
<dbReference type="GeneID" id="4591334"/>
<dbReference type="KEGG" id="nfi:NFIA_017280"/>
<dbReference type="VEuPathDB" id="FungiDB:NFIA_017280"/>
<dbReference type="eggNOG" id="KOG1654">
    <property type="taxonomic scope" value="Eukaryota"/>
</dbReference>
<dbReference type="HOGENOM" id="CLU_119276_0_1_1"/>
<dbReference type="OMA" id="AVYQEHK"/>
<dbReference type="OrthoDB" id="6738456at2759"/>
<dbReference type="Proteomes" id="UP000006702">
    <property type="component" value="Unassembled WGS sequence"/>
</dbReference>
<dbReference type="GO" id="GO:0000421">
    <property type="term" value="C:autophagosome membrane"/>
    <property type="evidence" value="ECO:0007669"/>
    <property type="project" value="UniProtKB-SubCell"/>
</dbReference>
<dbReference type="GO" id="GO:0031410">
    <property type="term" value="C:cytoplasmic vesicle"/>
    <property type="evidence" value="ECO:0007669"/>
    <property type="project" value="UniProtKB-KW"/>
</dbReference>
<dbReference type="GO" id="GO:0006914">
    <property type="term" value="P:autophagy"/>
    <property type="evidence" value="ECO:0007669"/>
    <property type="project" value="UniProtKB-KW"/>
</dbReference>
<dbReference type="GO" id="GO:0015031">
    <property type="term" value="P:protein transport"/>
    <property type="evidence" value="ECO:0007669"/>
    <property type="project" value="UniProtKB-KW"/>
</dbReference>
<dbReference type="CDD" id="cd16128">
    <property type="entry name" value="Ubl_ATG8"/>
    <property type="match status" value="1"/>
</dbReference>
<dbReference type="FunFam" id="3.10.20.90:FF:000010">
    <property type="entry name" value="Autophagy-related protein"/>
    <property type="match status" value="1"/>
</dbReference>
<dbReference type="Gene3D" id="3.10.20.90">
    <property type="entry name" value="Phosphatidylinositol 3-kinase Catalytic Subunit, Chain A, domain 1"/>
    <property type="match status" value="1"/>
</dbReference>
<dbReference type="InterPro" id="IPR004241">
    <property type="entry name" value="Atg8-like"/>
</dbReference>
<dbReference type="InterPro" id="IPR029071">
    <property type="entry name" value="Ubiquitin-like_domsf"/>
</dbReference>
<dbReference type="PANTHER" id="PTHR10969">
    <property type="entry name" value="MICROTUBULE-ASSOCIATED PROTEINS 1A/1B LIGHT CHAIN 3-RELATED"/>
    <property type="match status" value="1"/>
</dbReference>
<dbReference type="Pfam" id="PF02991">
    <property type="entry name" value="ATG8"/>
    <property type="match status" value="1"/>
</dbReference>
<dbReference type="SUPFAM" id="SSF54236">
    <property type="entry name" value="Ubiquitin-like"/>
    <property type="match status" value="1"/>
</dbReference>
<accession>A1D3N4</accession>
<gene>
    <name type="primary">atg8</name>
    <name type="ORF">NFIA_017280</name>
</gene>
<name>ATG8_NEOFI</name>
<proteinExistence type="inferred from homology"/>
<feature type="chain" id="PRO_0000317892" description="Autophagy-related protein 8">
    <location>
        <begin position="1"/>
        <end position="116"/>
    </location>
</feature>
<feature type="propeptide" id="PRO_0000317893" description="Removed in mature form" evidence="1">
    <location>
        <begin position="117"/>
        <end position="118"/>
    </location>
</feature>
<feature type="site" description="Cleavage; by atg4" evidence="1">
    <location>
        <begin position="116"/>
        <end position="117"/>
    </location>
</feature>
<feature type="lipid moiety-binding region" description="Phosphatidylethanolamine amidated glycine" evidence="1">
    <location>
        <position position="116"/>
    </location>
</feature>